<reference key="1">
    <citation type="journal article" date="2000" name="Nucleic Acids Res.">
        <title>Genome sequences of Chlamydia trachomatis MoPn and Chlamydia pneumoniae AR39.</title>
        <authorList>
            <person name="Read T.D."/>
            <person name="Brunham R.C."/>
            <person name="Shen C."/>
            <person name="Gill S.R."/>
            <person name="Heidelberg J.F."/>
            <person name="White O."/>
            <person name="Hickey E.K."/>
            <person name="Peterson J.D."/>
            <person name="Utterback T.R."/>
            <person name="Berry K.J."/>
            <person name="Bass S."/>
            <person name="Linher K.D."/>
            <person name="Weidman J.F."/>
            <person name="Khouri H.M."/>
            <person name="Craven B."/>
            <person name="Bowman C."/>
            <person name="Dodson R.J."/>
            <person name="Gwinn M.L."/>
            <person name="Nelson W.C."/>
            <person name="DeBoy R.T."/>
            <person name="Kolonay J.F."/>
            <person name="McClarty G."/>
            <person name="Salzberg S.L."/>
            <person name="Eisen J.A."/>
            <person name="Fraser C.M."/>
        </authorList>
    </citation>
    <scope>NUCLEOTIDE SEQUENCE [LARGE SCALE GENOMIC DNA]</scope>
    <source>
        <strain>MoPn / Nigg</strain>
    </source>
</reference>
<dbReference type="EMBL" id="AE002160">
    <property type="protein sequence ID" value="AAF73575.1"/>
    <property type="molecule type" value="Genomic_DNA"/>
</dbReference>
<dbReference type="RefSeq" id="WP_010230903.1">
    <property type="nucleotide sequence ID" value="NZ_CP063055.1"/>
</dbReference>
<dbReference type="SMR" id="Q9PK83"/>
<dbReference type="GeneID" id="1245943"/>
<dbReference type="KEGG" id="cmu:TC_0584"/>
<dbReference type="eggNOG" id="COG1390">
    <property type="taxonomic scope" value="Bacteria"/>
</dbReference>
<dbReference type="HOGENOM" id="CLU_1314973_0_0_0"/>
<dbReference type="OrthoDB" id="21003at2"/>
<dbReference type="Proteomes" id="UP000000800">
    <property type="component" value="Chromosome"/>
</dbReference>
<dbReference type="GO" id="GO:0033178">
    <property type="term" value="C:proton-transporting two-sector ATPase complex, catalytic domain"/>
    <property type="evidence" value="ECO:0007669"/>
    <property type="project" value="InterPro"/>
</dbReference>
<dbReference type="GO" id="GO:0005524">
    <property type="term" value="F:ATP binding"/>
    <property type="evidence" value="ECO:0007669"/>
    <property type="project" value="UniProtKB-UniRule"/>
</dbReference>
<dbReference type="GO" id="GO:0046933">
    <property type="term" value="F:proton-transporting ATP synthase activity, rotational mechanism"/>
    <property type="evidence" value="ECO:0007669"/>
    <property type="project" value="UniProtKB-UniRule"/>
</dbReference>
<dbReference type="GO" id="GO:0046961">
    <property type="term" value="F:proton-transporting ATPase activity, rotational mechanism"/>
    <property type="evidence" value="ECO:0007669"/>
    <property type="project" value="InterPro"/>
</dbReference>
<dbReference type="GO" id="GO:0042777">
    <property type="term" value="P:proton motive force-driven plasma membrane ATP synthesis"/>
    <property type="evidence" value="ECO:0007669"/>
    <property type="project" value="UniProtKB-UniRule"/>
</dbReference>
<dbReference type="Gene3D" id="1.20.5.2950">
    <property type="match status" value="1"/>
</dbReference>
<dbReference type="HAMAP" id="MF_00311">
    <property type="entry name" value="ATP_synth_E_arch"/>
    <property type="match status" value="1"/>
</dbReference>
<dbReference type="InterPro" id="IPR002842">
    <property type="entry name" value="ATPase_V1_Esu"/>
</dbReference>
<dbReference type="InterPro" id="IPR009335">
    <property type="entry name" value="T3SS_HrpE/ATPase_suE"/>
</dbReference>
<dbReference type="NCBIfam" id="NF002170">
    <property type="entry name" value="PRK01005.1"/>
    <property type="match status" value="1"/>
</dbReference>
<dbReference type="Pfam" id="PF06188">
    <property type="entry name" value="HrpE"/>
    <property type="match status" value="1"/>
</dbReference>
<protein>
    <recommendedName>
        <fullName>V-type ATP synthase subunit E</fullName>
    </recommendedName>
    <alternativeName>
        <fullName>V-ATPase subunit E</fullName>
    </alternativeName>
</protein>
<sequence>MADLSAQDKLKQICDTLREETLKPAEEEAGSIVHNAREQAKRIVEEAKEEAQRIIRSAEETASQTLKKGEAALVQAGKRSLENLKQAVETKIFKESLVEWLDGVTTDPGVSAKFVQALVQTVETQGISGNLSACIGKHVSARAVNEALGKEITSKLKDKGVVIGKFSGGAQLKVEERNWVLDISSEALLDLLTRFLQKDFREMIFQSC</sequence>
<organism>
    <name type="scientific">Chlamydia muridarum (strain MoPn / Nigg)</name>
    <dbReference type="NCBI Taxonomy" id="243161"/>
    <lineage>
        <taxon>Bacteria</taxon>
        <taxon>Pseudomonadati</taxon>
        <taxon>Chlamydiota</taxon>
        <taxon>Chlamydiia</taxon>
        <taxon>Chlamydiales</taxon>
        <taxon>Chlamydiaceae</taxon>
        <taxon>Chlamydia/Chlamydophila group</taxon>
        <taxon>Chlamydia</taxon>
    </lineage>
</organism>
<evidence type="ECO:0000250" key="1"/>
<evidence type="ECO:0000305" key="2"/>
<accession>Q9PK83</accession>
<comment type="function">
    <text evidence="1">Produces ATP from ADP in the presence of a proton gradient across the membrane.</text>
</comment>
<comment type="similarity">
    <text evidence="2">Belongs to the V-ATPase E subunit family.</text>
</comment>
<name>VATE_CHLMU</name>
<keyword id="KW-0066">ATP synthesis</keyword>
<keyword id="KW-0375">Hydrogen ion transport</keyword>
<keyword id="KW-0406">Ion transport</keyword>
<keyword id="KW-0813">Transport</keyword>
<gene>
    <name type="primary">atpE</name>
    <name type="ordered locus">TC_0584</name>
</gene>
<proteinExistence type="inferred from homology"/>
<feature type="chain" id="PRO_0000117330" description="V-type ATP synthase subunit E">
    <location>
        <begin position="1"/>
        <end position="208"/>
    </location>
</feature>